<accession>P83391</accession>
<organism evidence="2">
    <name type="scientific">Cladophora glomerata</name>
    <dbReference type="NCBI Taxonomy" id="162068"/>
    <lineage>
        <taxon>Eukaryota</taxon>
        <taxon>Viridiplantae</taxon>
        <taxon>Chlorophyta</taxon>
        <taxon>Ulvophyceae</taxon>
        <taxon>TCBD clade</taxon>
        <taxon>Cladophorales</taxon>
        <taxon>Cladophoraceae</taxon>
        <taxon>Cladophora</taxon>
    </lineage>
</organism>
<keyword id="KW-0002">3D-structure</keyword>
<keyword id="KW-0150">Chloroplast</keyword>
<keyword id="KW-0903">Direct protein sequencing</keyword>
<keyword id="KW-0249">Electron transport</keyword>
<keyword id="KW-0349">Heme</keyword>
<keyword id="KW-0408">Iron</keyword>
<keyword id="KW-0479">Metal-binding</keyword>
<keyword id="KW-0602">Photosynthesis</keyword>
<keyword id="KW-0934">Plastid</keyword>
<keyword id="KW-0793">Thylakoid</keyword>
<keyword id="KW-0813">Transport</keyword>
<dbReference type="PDB" id="1LS9">
    <property type="method" value="X-ray"/>
    <property type="resolution" value="1.30 A"/>
    <property type="chains" value="A=1-91"/>
</dbReference>
<dbReference type="PDBsum" id="1LS9"/>
<dbReference type="SMR" id="P83391"/>
<dbReference type="EvolutionaryTrace" id="P83391"/>
<dbReference type="GO" id="GO:0009543">
    <property type="term" value="C:chloroplast thylakoid lumen"/>
    <property type="evidence" value="ECO:0007669"/>
    <property type="project" value="UniProtKB-SubCell"/>
</dbReference>
<dbReference type="GO" id="GO:0009055">
    <property type="term" value="F:electron transfer activity"/>
    <property type="evidence" value="ECO:0007669"/>
    <property type="project" value="InterPro"/>
</dbReference>
<dbReference type="GO" id="GO:0020037">
    <property type="term" value="F:heme binding"/>
    <property type="evidence" value="ECO:0007669"/>
    <property type="project" value="InterPro"/>
</dbReference>
<dbReference type="GO" id="GO:0005506">
    <property type="term" value="F:iron ion binding"/>
    <property type="evidence" value="ECO:0007669"/>
    <property type="project" value="InterPro"/>
</dbReference>
<dbReference type="GO" id="GO:0015979">
    <property type="term" value="P:photosynthesis"/>
    <property type="evidence" value="ECO:0007669"/>
    <property type="project" value="UniProtKB-KW"/>
</dbReference>
<dbReference type="Gene3D" id="1.10.760.10">
    <property type="entry name" value="Cytochrome c-like domain"/>
    <property type="match status" value="1"/>
</dbReference>
<dbReference type="InterPro" id="IPR009056">
    <property type="entry name" value="Cyt_c-like_dom"/>
</dbReference>
<dbReference type="InterPro" id="IPR036909">
    <property type="entry name" value="Cyt_c-like_dom_sf"/>
</dbReference>
<dbReference type="InterPro" id="IPR023655">
    <property type="entry name" value="Cyt_C6"/>
</dbReference>
<dbReference type="InterPro" id="IPR008168">
    <property type="entry name" value="Cyt_C_IC"/>
</dbReference>
<dbReference type="PANTHER" id="PTHR34688">
    <property type="entry name" value="CYTOCHROME C6, CHLOROPLASTIC"/>
    <property type="match status" value="1"/>
</dbReference>
<dbReference type="PANTHER" id="PTHR34688:SF2">
    <property type="entry name" value="CYTOCHROME C6, CHLOROPLASTIC"/>
    <property type="match status" value="1"/>
</dbReference>
<dbReference type="Pfam" id="PF13442">
    <property type="entry name" value="Cytochrome_CBB3"/>
    <property type="match status" value="1"/>
</dbReference>
<dbReference type="PRINTS" id="PR00605">
    <property type="entry name" value="CYTCHROMECIC"/>
</dbReference>
<dbReference type="SUPFAM" id="SSF46626">
    <property type="entry name" value="Cytochrome c"/>
    <property type="match status" value="1"/>
</dbReference>
<dbReference type="PROSITE" id="PS51007">
    <property type="entry name" value="CYTC"/>
    <property type="match status" value="1"/>
</dbReference>
<comment type="function">
    <text>Functions as an electron carrier between membrane-bound cytochrome b6-f and photosystem I in oxygenic photosynthesis.</text>
</comment>
<comment type="subunit">
    <text>Monomer.</text>
</comment>
<comment type="subcellular location">
    <subcellularLocation>
        <location>Plastid</location>
        <location>Chloroplast thylakoid lumen</location>
    </subcellularLocation>
</comment>
<comment type="PTM">
    <text>Binds 1 heme c group covalently per subunit.</text>
</comment>
<comment type="similarity">
    <text evidence="2">Belongs to the cytochrome c family. PetJ subfamily.</text>
</comment>
<gene>
    <name type="primary">petJ</name>
</gene>
<reference key="1">
    <citation type="journal article" date="2002" name="Biochemistry">
        <title>Structural basis for the molecular properties of cytochrome c6.</title>
        <authorList>
            <person name="Dikiy A."/>
            <person name="Carpentier W."/>
            <person name="Vandenberghe I.H.M."/>
            <person name="Borsari M."/>
            <person name="Safarov N."/>
            <person name="Dikaya E."/>
            <person name="Van Beeumen J."/>
            <person name="Ciurli S."/>
        </authorList>
    </citation>
    <scope>PROTEIN SEQUENCE</scope>
    <scope>IDENTIFICATION BY MASS SPECTROMETRY</scope>
    <scope>X-RAY CRYSTALLOGRAPHY (1.3 ANGSTROMS)</scope>
</reference>
<feature type="chain" id="PRO_0000208674" description="Cytochrome c6">
    <location>
        <begin position="1"/>
        <end position="91"/>
    </location>
</feature>
<feature type="binding site" description="covalent" evidence="1">
    <location>
        <position position="17"/>
    </location>
    <ligand>
        <name>heme c</name>
        <dbReference type="ChEBI" id="CHEBI:61717"/>
    </ligand>
</feature>
<feature type="binding site" description="covalent" evidence="1">
    <location>
        <position position="20"/>
    </location>
    <ligand>
        <name>heme c</name>
        <dbReference type="ChEBI" id="CHEBI:61717"/>
    </ligand>
</feature>
<feature type="binding site" description="axial binding residue" evidence="1">
    <location>
        <position position="21"/>
    </location>
    <ligand>
        <name>heme c</name>
        <dbReference type="ChEBI" id="CHEBI:61717"/>
    </ligand>
    <ligandPart>
        <name>Fe</name>
        <dbReference type="ChEBI" id="CHEBI:18248"/>
    </ligandPart>
</feature>
<feature type="binding site" description="axial binding residue" evidence="1">
    <location>
        <position position="63"/>
    </location>
    <ligand>
        <name>heme c</name>
        <dbReference type="ChEBI" id="CHEBI:61717"/>
    </ligand>
    <ligandPart>
        <name>Fe</name>
        <dbReference type="ChEBI" id="CHEBI:18248"/>
    </ligandPart>
</feature>
<feature type="helix" evidence="3">
    <location>
        <begin position="3"/>
        <end position="16"/>
    </location>
</feature>
<feature type="helix" evidence="3">
    <location>
        <begin position="18"/>
        <end position="21"/>
    </location>
</feature>
<feature type="helix" evidence="3">
    <location>
        <begin position="22"/>
        <end position="24"/>
    </location>
</feature>
<feature type="strand" evidence="3">
    <location>
        <begin position="27"/>
        <end position="29"/>
    </location>
</feature>
<feature type="helix" evidence="3">
    <location>
        <begin position="36"/>
        <end position="42"/>
    </location>
</feature>
<feature type="helix" evidence="3">
    <location>
        <begin position="49"/>
        <end position="58"/>
    </location>
</feature>
<feature type="turn" evidence="3">
    <location>
        <begin position="67"/>
        <end position="69"/>
    </location>
</feature>
<feature type="helix" evidence="3">
    <location>
        <begin position="72"/>
        <end position="87"/>
    </location>
</feature>
<proteinExistence type="evidence at protein level"/>
<evidence type="ECO:0000255" key="1">
    <source>
        <dbReference type="PROSITE-ProRule" id="PRU00433"/>
    </source>
</evidence>
<evidence type="ECO:0000305" key="2"/>
<evidence type="ECO:0007829" key="3">
    <source>
        <dbReference type="PDB" id="1LS9"/>
    </source>
</evidence>
<sequence length="91" mass="9833">VDAELLADGKKVFAGNCAACHLGGNNSVLADKTLKKDAIEKYLEGGLTLEAIKYQVNNGKGAMPAWADRLDEDDIEAVSNYVYDQAVNSKW</sequence>
<name>CYC6_CLAGO</name>
<protein>
    <recommendedName>
        <fullName>Cytochrome c6</fullName>
    </recommendedName>
    <alternativeName>
        <fullName>Cytochrome c-553</fullName>
    </alternativeName>
    <alternativeName>
        <fullName>Cytochrome c553</fullName>
    </alternativeName>
    <alternativeName>
        <fullName>Soluble cytochrome f</fullName>
    </alternativeName>
</protein>